<comment type="function">
    <text evidence="1">Catalyzes the base-exchange of a guanine (G) residue with the queuine precursor 7-aminomethyl-7-deazaguanine (PreQ1) at position 34 (anticodon wobble position) in tRNAs with GU(N) anticodons (tRNA-Asp, -Asn, -His and -Tyr). Catalysis occurs through a double-displacement mechanism. The nucleophile active site attacks the C1' of nucleotide 34 to detach the guanine base from the RNA, forming a covalent enzyme-RNA intermediate. The proton acceptor active site deprotonates the incoming PreQ1, allowing a nucleophilic attack on the C1' of the ribose to form the product. After dissociation, two additional enzymatic reactions on the tRNA convert PreQ1 to queuine (Q), resulting in the hypermodified nucleoside queuosine (7-(((4,5-cis-dihydroxy-2-cyclopenten-1-yl)amino)methyl)-7-deazaguanosine).</text>
</comment>
<comment type="catalytic activity">
    <reaction evidence="1">
        <text>7-aminomethyl-7-carbaguanine + guanosine(34) in tRNA = 7-aminomethyl-7-carbaguanosine(34) in tRNA + guanine</text>
        <dbReference type="Rhea" id="RHEA:24104"/>
        <dbReference type="Rhea" id="RHEA-COMP:10341"/>
        <dbReference type="Rhea" id="RHEA-COMP:10342"/>
        <dbReference type="ChEBI" id="CHEBI:16235"/>
        <dbReference type="ChEBI" id="CHEBI:58703"/>
        <dbReference type="ChEBI" id="CHEBI:74269"/>
        <dbReference type="ChEBI" id="CHEBI:82833"/>
        <dbReference type="EC" id="2.4.2.29"/>
    </reaction>
</comment>
<comment type="cofactor">
    <cofactor evidence="1">
        <name>Zn(2+)</name>
        <dbReference type="ChEBI" id="CHEBI:29105"/>
    </cofactor>
    <text evidence="1">Binds 1 zinc ion per subunit.</text>
</comment>
<comment type="pathway">
    <text evidence="1">tRNA modification; tRNA-queuosine biosynthesis.</text>
</comment>
<comment type="subunit">
    <text evidence="1">Homodimer. Within each dimer, one monomer is responsible for RNA recognition and catalysis, while the other monomer binds to the replacement base PreQ1.</text>
</comment>
<comment type="similarity">
    <text evidence="1">Belongs to the queuine tRNA-ribosyltransferase family.</text>
</comment>
<organism>
    <name type="scientific">Symbiobacterium thermophilum (strain DSM 24528 / JCM 14929 / IAM 14863 / T)</name>
    <dbReference type="NCBI Taxonomy" id="292459"/>
    <lineage>
        <taxon>Bacteria</taxon>
        <taxon>Bacillati</taxon>
        <taxon>Bacillota</taxon>
        <taxon>Clostridia</taxon>
        <taxon>Eubacteriales</taxon>
        <taxon>Symbiobacteriaceae</taxon>
        <taxon>Symbiobacterium</taxon>
    </lineage>
</organism>
<reference key="1">
    <citation type="journal article" date="2004" name="Nucleic Acids Res.">
        <title>Genome sequence of Symbiobacterium thermophilum, an uncultivable bacterium that depends on microbial commensalism.</title>
        <authorList>
            <person name="Ueda K."/>
            <person name="Yamashita A."/>
            <person name="Ishikawa J."/>
            <person name="Shimada M."/>
            <person name="Watsuji T."/>
            <person name="Morimura K."/>
            <person name="Ikeda H."/>
            <person name="Hattori M."/>
            <person name="Beppu T."/>
        </authorList>
    </citation>
    <scope>NUCLEOTIDE SEQUENCE [LARGE SCALE GENOMIC DNA]</scope>
    <source>
        <strain>DSM 24528 / JCM 14929 / IAM 14863 / T</strain>
    </source>
</reference>
<keyword id="KW-0328">Glycosyltransferase</keyword>
<keyword id="KW-0479">Metal-binding</keyword>
<keyword id="KW-0671">Queuosine biosynthesis</keyword>
<keyword id="KW-1185">Reference proteome</keyword>
<keyword id="KW-0808">Transferase</keyword>
<keyword id="KW-0819">tRNA processing</keyword>
<keyword id="KW-0862">Zinc</keyword>
<sequence>MAVRWELLRRDPASAARLGRLHTPRGVIETPVFMPVGTQATVKTLNPEEVWDLGARIILSNTYHLYLRPGHDLVQEAGGLHRFMNWKGAVLTDSGGFQVFSLADLRKITEEGVQFRSHIDGSTHFLSPEKAIAVENALGADIIMAFDECTPWPCDYDYAKRSIERTARWAARCKAAHARPDEQALFGIVQGSTFADLRRQSAEEIVALDFPGYGIGGLSVGEPKELMHEMLEVQVPLLPDDRPRYLMGVGSPEDLVEGVWRGVDMFDCVLPTRIARHGTVFVPDGKMTVRNAEFARDFLPIQEGCDCYACRNFSRAYIRHLLKADEMLGLRLCSIHNLRFLVRLMEEIRAALAAGTFAEYRKAFLERWHAGEAERRERARAAGGAGHAPGPAEPLLPENR</sequence>
<accession>Q67Q92</accession>
<proteinExistence type="inferred from homology"/>
<feature type="chain" id="PRO_1000016879" description="Queuine tRNA-ribosyltransferase">
    <location>
        <begin position="1"/>
        <end position="400"/>
    </location>
</feature>
<feature type="region of interest" description="RNA binding" evidence="1">
    <location>
        <begin position="248"/>
        <end position="254"/>
    </location>
</feature>
<feature type="region of interest" description="RNA binding; important for wobble base 34 recognition" evidence="1">
    <location>
        <begin position="272"/>
        <end position="276"/>
    </location>
</feature>
<feature type="region of interest" description="Disordered" evidence="2">
    <location>
        <begin position="375"/>
        <end position="400"/>
    </location>
</feature>
<feature type="compositionally biased region" description="Low complexity" evidence="2">
    <location>
        <begin position="388"/>
        <end position="400"/>
    </location>
</feature>
<feature type="active site" description="Proton acceptor" evidence="1">
    <location>
        <position position="93"/>
    </location>
</feature>
<feature type="active site" description="Nucleophile" evidence="1">
    <location>
        <position position="267"/>
    </location>
</feature>
<feature type="binding site" evidence="1">
    <location>
        <begin position="93"/>
        <end position="97"/>
    </location>
    <ligand>
        <name>substrate</name>
    </ligand>
</feature>
<feature type="binding site" evidence="1">
    <location>
        <position position="147"/>
    </location>
    <ligand>
        <name>substrate</name>
    </ligand>
</feature>
<feature type="binding site" evidence="1">
    <location>
        <position position="190"/>
    </location>
    <ligand>
        <name>substrate</name>
    </ligand>
</feature>
<feature type="binding site" evidence="1">
    <location>
        <position position="217"/>
    </location>
    <ligand>
        <name>substrate</name>
    </ligand>
</feature>
<feature type="binding site" evidence="1">
    <location>
        <position position="305"/>
    </location>
    <ligand>
        <name>Zn(2+)</name>
        <dbReference type="ChEBI" id="CHEBI:29105"/>
    </ligand>
</feature>
<feature type="binding site" evidence="1">
    <location>
        <position position="307"/>
    </location>
    <ligand>
        <name>Zn(2+)</name>
        <dbReference type="ChEBI" id="CHEBI:29105"/>
    </ligand>
</feature>
<feature type="binding site" evidence="1">
    <location>
        <position position="310"/>
    </location>
    <ligand>
        <name>Zn(2+)</name>
        <dbReference type="ChEBI" id="CHEBI:29105"/>
    </ligand>
</feature>
<feature type="binding site" evidence="1">
    <location>
        <position position="336"/>
    </location>
    <ligand>
        <name>Zn(2+)</name>
        <dbReference type="ChEBI" id="CHEBI:29105"/>
    </ligand>
</feature>
<protein>
    <recommendedName>
        <fullName evidence="1">Queuine tRNA-ribosyltransferase</fullName>
        <ecNumber evidence="1">2.4.2.29</ecNumber>
    </recommendedName>
    <alternativeName>
        <fullName evidence="1">Guanine insertion enzyme</fullName>
    </alternativeName>
    <alternativeName>
        <fullName evidence="1">tRNA-guanine transglycosylase</fullName>
    </alternativeName>
</protein>
<gene>
    <name evidence="1" type="primary">tgt</name>
    <name type="ordered locus">STH1166</name>
</gene>
<dbReference type="EC" id="2.4.2.29" evidence="1"/>
<dbReference type="EMBL" id="AP006840">
    <property type="protein sequence ID" value="BAD40151.1"/>
    <property type="molecule type" value="Genomic_DNA"/>
</dbReference>
<dbReference type="RefSeq" id="WP_011195297.1">
    <property type="nucleotide sequence ID" value="NC_006177.1"/>
</dbReference>
<dbReference type="SMR" id="Q67Q92"/>
<dbReference type="STRING" id="292459.STH1166"/>
<dbReference type="KEGG" id="sth:STH1166"/>
<dbReference type="eggNOG" id="COG0343">
    <property type="taxonomic scope" value="Bacteria"/>
</dbReference>
<dbReference type="HOGENOM" id="CLU_022060_0_1_9"/>
<dbReference type="OrthoDB" id="9805417at2"/>
<dbReference type="UniPathway" id="UPA00392"/>
<dbReference type="Proteomes" id="UP000000417">
    <property type="component" value="Chromosome"/>
</dbReference>
<dbReference type="GO" id="GO:0005829">
    <property type="term" value="C:cytosol"/>
    <property type="evidence" value="ECO:0007669"/>
    <property type="project" value="TreeGrafter"/>
</dbReference>
<dbReference type="GO" id="GO:0046872">
    <property type="term" value="F:metal ion binding"/>
    <property type="evidence" value="ECO:0007669"/>
    <property type="project" value="UniProtKB-KW"/>
</dbReference>
<dbReference type="GO" id="GO:0008479">
    <property type="term" value="F:tRNA-guanosine(34) queuine transglycosylase activity"/>
    <property type="evidence" value="ECO:0007669"/>
    <property type="project" value="UniProtKB-UniRule"/>
</dbReference>
<dbReference type="GO" id="GO:0008616">
    <property type="term" value="P:queuosine biosynthetic process"/>
    <property type="evidence" value="ECO:0007669"/>
    <property type="project" value="UniProtKB-UniRule"/>
</dbReference>
<dbReference type="GO" id="GO:0002099">
    <property type="term" value="P:tRNA wobble guanine modification"/>
    <property type="evidence" value="ECO:0007669"/>
    <property type="project" value="TreeGrafter"/>
</dbReference>
<dbReference type="GO" id="GO:0101030">
    <property type="term" value="P:tRNA-guanine transglycosylation"/>
    <property type="evidence" value="ECO:0007669"/>
    <property type="project" value="InterPro"/>
</dbReference>
<dbReference type="FunFam" id="3.20.20.105:FF:000001">
    <property type="entry name" value="Queuine tRNA-ribosyltransferase"/>
    <property type="match status" value="1"/>
</dbReference>
<dbReference type="Gene3D" id="3.20.20.105">
    <property type="entry name" value="Queuine tRNA-ribosyltransferase-like"/>
    <property type="match status" value="1"/>
</dbReference>
<dbReference type="HAMAP" id="MF_00168">
    <property type="entry name" value="Q_tRNA_Tgt"/>
    <property type="match status" value="1"/>
</dbReference>
<dbReference type="InterPro" id="IPR050076">
    <property type="entry name" value="ArchSynthase1/Queuine_TRR"/>
</dbReference>
<dbReference type="InterPro" id="IPR004803">
    <property type="entry name" value="TGT"/>
</dbReference>
<dbReference type="InterPro" id="IPR036511">
    <property type="entry name" value="TGT-like_sf"/>
</dbReference>
<dbReference type="InterPro" id="IPR002616">
    <property type="entry name" value="tRNA_ribo_trans-like"/>
</dbReference>
<dbReference type="NCBIfam" id="TIGR00430">
    <property type="entry name" value="Q_tRNA_tgt"/>
    <property type="match status" value="1"/>
</dbReference>
<dbReference type="NCBIfam" id="TIGR00449">
    <property type="entry name" value="tgt_general"/>
    <property type="match status" value="1"/>
</dbReference>
<dbReference type="PANTHER" id="PTHR46499">
    <property type="entry name" value="QUEUINE TRNA-RIBOSYLTRANSFERASE"/>
    <property type="match status" value="1"/>
</dbReference>
<dbReference type="PANTHER" id="PTHR46499:SF1">
    <property type="entry name" value="QUEUINE TRNA-RIBOSYLTRANSFERASE"/>
    <property type="match status" value="1"/>
</dbReference>
<dbReference type="Pfam" id="PF01702">
    <property type="entry name" value="TGT"/>
    <property type="match status" value="1"/>
</dbReference>
<dbReference type="SUPFAM" id="SSF51713">
    <property type="entry name" value="tRNA-guanine transglycosylase"/>
    <property type="match status" value="1"/>
</dbReference>
<evidence type="ECO:0000255" key="1">
    <source>
        <dbReference type="HAMAP-Rule" id="MF_00168"/>
    </source>
</evidence>
<evidence type="ECO:0000256" key="2">
    <source>
        <dbReference type="SAM" id="MobiDB-lite"/>
    </source>
</evidence>
<name>TGT_SYMTH</name>